<protein>
    <recommendedName>
        <fullName evidence="1">Cytochrome c-type biogenesis protein CcmE</fullName>
    </recommendedName>
    <alternativeName>
        <fullName evidence="1">Cytochrome c maturation protein E</fullName>
    </alternativeName>
    <alternativeName>
        <fullName evidence="1">Heme chaperone CcmE</fullName>
    </alternativeName>
</protein>
<proteinExistence type="inferred from homology"/>
<dbReference type="EMBL" id="CP000143">
    <property type="protein sequence ID" value="ABA79106.2"/>
    <property type="molecule type" value="Genomic_DNA"/>
</dbReference>
<dbReference type="RefSeq" id="WP_002720104.1">
    <property type="nucleotide sequence ID" value="NZ_CP030271.1"/>
</dbReference>
<dbReference type="RefSeq" id="YP_353007.2">
    <property type="nucleotide sequence ID" value="NC_007493.2"/>
</dbReference>
<dbReference type="SMR" id="Q3J278"/>
<dbReference type="STRING" id="272943.RSP_2945"/>
<dbReference type="EnsemblBacteria" id="ABA79106">
    <property type="protein sequence ID" value="ABA79106"/>
    <property type="gene ID" value="RSP_2945"/>
</dbReference>
<dbReference type="GeneID" id="67446687"/>
<dbReference type="KEGG" id="rsp:RSP_2945"/>
<dbReference type="PATRIC" id="fig|272943.9.peg.1883"/>
<dbReference type="eggNOG" id="COG2332">
    <property type="taxonomic scope" value="Bacteria"/>
</dbReference>
<dbReference type="OrthoDB" id="9793584at2"/>
<dbReference type="Proteomes" id="UP000002703">
    <property type="component" value="Chromosome 1"/>
</dbReference>
<dbReference type="GO" id="GO:0005886">
    <property type="term" value="C:plasma membrane"/>
    <property type="evidence" value="ECO:0007669"/>
    <property type="project" value="UniProtKB-SubCell"/>
</dbReference>
<dbReference type="GO" id="GO:0020037">
    <property type="term" value="F:heme binding"/>
    <property type="evidence" value="ECO:0007669"/>
    <property type="project" value="InterPro"/>
</dbReference>
<dbReference type="GO" id="GO:0046872">
    <property type="term" value="F:metal ion binding"/>
    <property type="evidence" value="ECO:0007669"/>
    <property type="project" value="UniProtKB-KW"/>
</dbReference>
<dbReference type="GO" id="GO:0017004">
    <property type="term" value="P:cytochrome complex assembly"/>
    <property type="evidence" value="ECO:0007669"/>
    <property type="project" value="UniProtKB-KW"/>
</dbReference>
<dbReference type="Gene3D" id="2.40.50.140">
    <property type="entry name" value="Nucleic acid-binding proteins"/>
    <property type="match status" value="1"/>
</dbReference>
<dbReference type="HAMAP" id="MF_01959">
    <property type="entry name" value="CcmE"/>
    <property type="match status" value="1"/>
</dbReference>
<dbReference type="InterPro" id="IPR004329">
    <property type="entry name" value="CcmE"/>
</dbReference>
<dbReference type="InterPro" id="IPR036127">
    <property type="entry name" value="CcmE-like_sf"/>
</dbReference>
<dbReference type="InterPro" id="IPR012340">
    <property type="entry name" value="NA-bd_OB-fold"/>
</dbReference>
<dbReference type="NCBIfam" id="NF009727">
    <property type="entry name" value="PRK13254.1-1"/>
    <property type="match status" value="1"/>
</dbReference>
<dbReference type="NCBIfam" id="NF009731">
    <property type="entry name" value="PRK13254.1-5"/>
    <property type="match status" value="1"/>
</dbReference>
<dbReference type="PANTHER" id="PTHR34128">
    <property type="entry name" value="CYTOCHROME C-TYPE BIOGENESIS PROTEIN CCME HOMOLOG, MITOCHONDRIAL"/>
    <property type="match status" value="1"/>
</dbReference>
<dbReference type="PANTHER" id="PTHR34128:SF2">
    <property type="entry name" value="CYTOCHROME C-TYPE BIOGENESIS PROTEIN CCME HOMOLOG, MITOCHONDRIAL"/>
    <property type="match status" value="1"/>
</dbReference>
<dbReference type="Pfam" id="PF03100">
    <property type="entry name" value="CcmE"/>
    <property type="match status" value="1"/>
</dbReference>
<dbReference type="SUPFAM" id="SSF82093">
    <property type="entry name" value="Heme chaperone CcmE"/>
    <property type="match status" value="1"/>
</dbReference>
<sequence>MKGLKKKRRIQIIALAFVALAGSTALIGYAMRDGINFFRSPTQVVEAPPPETEVFRIGGLVEKGSLVRGQGETVTFRVTDTNATVPVSFTGVLPDLFAEDAGMVGTGRLVGGVFEASEILAKHDETYMPKEVVDALKEQGVFQHTEDQPQG</sequence>
<name>CCME_CERS4</name>
<accession>Q3J278</accession>
<keyword id="KW-0997">Cell inner membrane</keyword>
<keyword id="KW-1003">Cell membrane</keyword>
<keyword id="KW-0201">Cytochrome c-type biogenesis</keyword>
<keyword id="KW-0349">Heme</keyword>
<keyword id="KW-0408">Iron</keyword>
<keyword id="KW-0472">Membrane</keyword>
<keyword id="KW-0479">Metal-binding</keyword>
<keyword id="KW-1185">Reference proteome</keyword>
<keyword id="KW-0735">Signal-anchor</keyword>
<keyword id="KW-0812">Transmembrane</keyword>
<keyword id="KW-1133">Transmembrane helix</keyword>
<feature type="chain" id="PRO_0000238852" description="Cytochrome c-type biogenesis protein CcmE">
    <location>
        <begin position="1"/>
        <end position="151"/>
    </location>
</feature>
<feature type="topological domain" description="Cytoplasmic" evidence="1">
    <location>
        <begin position="1"/>
        <end position="9"/>
    </location>
</feature>
<feature type="transmembrane region" description="Helical; Signal-anchor for type II membrane protein" evidence="1">
    <location>
        <begin position="10"/>
        <end position="30"/>
    </location>
</feature>
<feature type="topological domain" description="Periplasmic" evidence="1">
    <location>
        <begin position="31"/>
        <end position="151"/>
    </location>
</feature>
<feature type="binding site" description="covalent" evidence="1">
    <location>
        <position position="123"/>
    </location>
    <ligand>
        <name>heme</name>
        <dbReference type="ChEBI" id="CHEBI:30413"/>
    </ligand>
</feature>
<feature type="binding site" description="axial binding residue" evidence="1">
    <location>
        <position position="127"/>
    </location>
    <ligand>
        <name>heme</name>
        <dbReference type="ChEBI" id="CHEBI:30413"/>
    </ligand>
    <ligandPart>
        <name>Fe</name>
        <dbReference type="ChEBI" id="CHEBI:18248"/>
    </ligandPart>
</feature>
<comment type="function">
    <text evidence="1">Heme chaperone required for the biogenesis of c-type cytochromes. Transiently binds heme delivered by CcmC and transfers the heme to apo-cytochromes in a process facilitated by CcmF and CcmH.</text>
</comment>
<comment type="subcellular location">
    <subcellularLocation>
        <location evidence="1">Cell inner membrane</location>
        <topology evidence="1">Single-pass type II membrane protein</topology>
        <orientation evidence="1">Periplasmic side</orientation>
    </subcellularLocation>
</comment>
<comment type="similarity">
    <text evidence="1">Belongs to the CcmE/CycJ family.</text>
</comment>
<gene>
    <name evidence="1" type="primary">ccmE</name>
    <name evidence="1" type="synonym">cycJ</name>
    <name type="ordered locus">RHOS4_15380</name>
    <name type="ORF">RSP_2945</name>
</gene>
<organism>
    <name type="scientific">Cereibacter sphaeroides (strain ATCC 17023 / DSM 158 / JCM 6121 / CCUG 31486 / LMG 2827 / NBRC 12203 / NCIMB 8253 / ATH 2.4.1.)</name>
    <name type="common">Rhodobacter sphaeroides</name>
    <dbReference type="NCBI Taxonomy" id="272943"/>
    <lineage>
        <taxon>Bacteria</taxon>
        <taxon>Pseudomonadati</taxon>
        <taxon>Pseudomonadota</taxon>
        <taxon>Alphaproteobacteria</taxon>
        <taxon>Rhodobacterales</taxon>
        <taxon>Paracoccaceae</taxon>
        <taxon>Cereibacter</taxon>
    </lineage>
</organism>
<reference key="1">
    <citation type="submission" date="2005-09" db="EMBL/GenBank/DDBJ databases">
        <title>Complete sequence of chromosome 1 of Rhodobacter sphaeroides 2.4.1.</title>
        <authorList>
            <person name="Copeland A."/>
            <person name="Lucas S."/>
            <person name="Lapidus A."/>
            <person name="Barry K."/>
            <person name="Detter J.C."/>
            <person name="Glavina T."/>
            <person name="Hammon N."/>
            <person name="Israni S."/>
            <person name="Pitluck S."/>
            <person name="Richardson P."/>
            <person name="Mackenzie C."/>
            <person name="Choudhary M."/>
            <person name="Larimer F."/>
            <person name="Hauser L.J."/>
            <person name="Land M."/>
            <person name="Donohue T.J."/>
            <person name="Kaplan S."/>
        </authorList>
    </citation>
    <scope>NUCLEOTIDE SEQUENCE [LARGE SCALE GENOMIC DNA]</scope>
    <source>
        <strain>ATCC 17023 / DSM 158 / JCM 6121 / CCUG 31486 / LMG 2827 / NBRC 12203 / NCIMB 8253 / ATH 2.4.1.</strain>
    </source>
</reference>
<evidence type="ECO:0000255" key="1">
    <source>
        <dbReference type="HAMAP-Rule" id="MF_01959"/>
    </source>
</evidence>